<accession>E0SAL0</accession>
<name>VGRGA_DICD3</name>
<proteinExistence type="inferred from homology"/>
<keyword id="KW-1185">Reference proteome</keyword>
<dbReference type="EMBL" id="CP002038">
    <property type="protein sequence ID" value="ADM97068.1"/>
    <property type="molecule type" value="Genomic_DNA"/>
</dbReference>
<dbReference type="RefSeq" id="WP_013316544.1">
    <property type="nucleotide sequence ID" value="NC_014500.1"/>
</dbReference>
<dbReference type="SMR" id="E0SAL0"/>
<dbReference type="STRING" id="198628.Dda3937_01760"/>
<dbReference type="KEGG" id="ddd:Dda3937_01760"/>
<dbReference type="PATRIC" id="fig|198628.6.peg.861"/>
<dbReference type="eggNOG" id="COG3501">
    <property type="taxonomic scope" value="Bacteria"/>
</dbReference>
<dbReference type="HOGENOM" id="CLU_004121_7_2_6"/>
<dbReference type="OrthoDB" id="6710627at2"/>
<dbReference type="Proteomes" id="UP000006859">
    <property type="component" value="Chromosome"/>
</dbReference>
<dbReference type="Gene3D" id="2.30.110.50">
    <property type="match status" value="1"/>
</dbReference>
<dbReference type="Gene3D" id="4.10.220.110">
    <property type="match status" value="1"/>
</dbReference>
<dbReference type="Gene3D" id="3.55.50.10">
    <property type="entry name" value="Baseplate protein-like domains"/>
    <property type="match status" value="1"/>
</dbReference>
<dbReference type="Gene3D" id="2.40.50.230">
    <property type="entry name" value="Gp5 N-terminal domain"/>
    <property type="match status" value="1"/>
</dbReference>
<dbReference type="InterPro" id="IPR006531">
    <property type="entry name" value="Gp5/Vgr_OB"/>
</dbReference>
<dbReference type="InterPro" id="IPR054030">
    <property type="entry name" value="Gp5_Vgr_C"/>
</dbReference>
<dbReference type="InterPro" id="IPR017847">
    <property type="entry name" value="T6SS_RhsGE_Vgr_subset"/>
</dbReference>
<dbReference type="InterPro" id="IPR006533">
    <property type="entry name" value="T6SS_Vgr_RhsGE"/>
</dbReference>
<dbReference type="InterPro" id="IPR050708">
    <property type="entry name" value="T6SS_VgrG/RHS"/>
</dbReference>
<dbReference type="InterPro" id="IPR037026">
    <property type="entry name" value="Vgr_OB-fold_dom_sf"/>
</dbReference>
<dbReference type="NCBIfam" id="TIGR01646">
    <property type="entry name" value="vgr_GE"/>
    <property type="match status" value="1"/>
</dbReference>
<dbReference type="NCBIfam" id="TIGR03361">
    <property type="entry name" value="VI_Rhs_Vgr"/>
    <property type="match status" value="1"/>
</dbReference>
<dbReference type="PANTHER" id="PTHR32305">
    <property type="match status" value="1"/>
</dbReference>
<dbReference type="PANTHER" id="PTHR32305:SF11">
    <property type="entry name" value="TYPE VI SECRETION SYSTEM SPIKE PROTEIN VGRG3"/>
    <property type="match status" value="1"/>
</dbReference>
<dbReference type="Pfam" id="PF22178">
    <property type="entry name" value="Gp5_trimer_C"/>
    <property type="match status" value="1"/>
</dbReference>
<dbReference type="Pfam" id="PF04717">
    <property type="entry name" value="Phage_base_V"/>
    <property type="match status" value="1"/>
</dbReference>
<dbReference type="Pfam" id="PF05954">
    <property type="entry name" value="Phage_GPD"/>
    <property type="match status" value="1"/>
</dbReference>
<dbReference type="SUPFAM" id="SSF69255">
    <property type="entry name" value="gp5 N-terminal domain-like"/>
    <property type="match status" value="1"/>
</dbReference>
<dbReference type="SUPFAM" id="SSF69349">
    <property type="entry name" value="Phage fibre proteins"/>
    <property type="match status" value="1"/>
</dbReference>
<dbReference type="SUPFAM" id="SSF69279">
    <property type="entry name" value="Phage tail proteins"/>
    <property type="match status" value="2"/>
</dbReference>
<organism>
    <name type="scientific">Dickeya dadantii (strain 3937)</name>
    <name type="common">Erwinia chrysanthemi (strain 3937)</name>
    <dbReference type="NCBI Taxonomy" id="198628"/>
    <lineage>
        <taxon>Bacteria</taxon>
        <taxon>Pseudomonadati</taxon>
        <taxon>Pseudomonadota</taxon>
        <taxon>Gammaproteobacteria</taxon>
        <taxon>Enterobacterales</taxon>
        <taxon>Pectobacteriaceae</taxon>
        <taxon>Dickeya</taxon>
    </lineage>
</organism>
<gene>
    <name type="primary">vgrGA</name>
    <name type="ordered locus">Dda3937_01760</name>
</gene>
<comment type="function">
    <text>A Vgr protein that is probably part of a type VI secretion system (T6SS). May be required for export of proteins involved in Rhs-mediated cellular contact-dependent growth inhibition (CDI).</text>
</comment>
<comment type="disruption phenotype">
    <text evidence="2">A double vgrGA-vgrGB deletion inhibits the ability of RhsB to inhibit cell growth.</text>
</comment>
<comment type="similarity">
    <text evidence="3">Belongs to the VgrG protein family.</text>
</comment>
<sequence>MANSTGLQFTVKVGALPDTTFAVVDFELSEALNQPFALSLNLASSLPGIDFGAVLDQPCELLVWYEGELQRRVSGIVSRFAQGDTGFRRTRYQAEVRPALWRLGLRTNARIFQTQKPDAIIGTLLEEAGITDFAFALRHEHAVREYCVQYRESDLAFINRLAAEEGLFYFHEFEAGKHRVVFADDAGALTKGPELFFNLATQGLSEGAYVRRFRYAEAVSTAEVALKDYSFKTPAYGLLHNKMSSELDHQRETYQHFDYPGRFKQDPSGKAFTGYRLDALRAGAMTGEGESNAAELMPGSSFTLTEHPNPAFNLAWQVVAVTHSGQQPQALEEESGGEPTTLSNSFEVVKGTTTWRAAMPYKPMVDGPQIATVVGPAGEEIYCDEFGRIKLQFPWDRYGASDDQSSCWVRVSQGWAGGQYGLIAIPRIGHEVVVSFLEGDPDQPIVTGRTFHATNPSPYPLPASKTRTSLRTSTHKGAGFNELRFEDQAGQEEVFIHAQKDMNTVVLNNRSTSVNASHTENVGGDQTVVVQHNQTVSVKENQVTEIQGEQTVAVTQNRNTTVNDNESLQVKNNIAIQSQSGDILIATAGGFIAIDKDGNISITGKGLVLNGTRIDLN</sequence>
<feature type="chain" id="PRO_0000423982" description="Putative type VI secretion system protein VgrGA">
    <location>
        <begin position="1"/>
        <end position="617"/>
    </location>
</feature>
<feature type="region of interest" description="Disordered" evidence="1">
    <location>
        <begin position="325"/>
        <end position="344"/>
    </location>
</feature>
<feature type="region of interest" description="Disordered" evidence="1">
    <location>
        <begin position="449"/>
        <end position="469"/>
    </location>
</feature>
<evidence type="ECO:0000256" key="1">
    <source>
        <dbReference type="SAM" id="MobiDB-lite"/>
    </source>
</evidence>
<evidence type="ECO:0000269" key="2">
    <source>
    </source>
</evidence>
<evidence type="ECO:0000305" key="3"/>
<protein>
    <recommendedName>
        <fullName>Putative type VI secretion system protein VgrGA</fullName>
    </recommendedName>
</protein>
<reference key="1">
    <citation type="journal article" date="2011" name="J. Bacteriol.">
        <title>Genome sequence of the plant-pathogenic bacterium Dickeya dadantii 3937.</title>
        <authorList>
            <person name="Glasner J.D."/>
            <person name="Yang C.H."/>
            <person name="Reverchon S."/>
            <person name="Hugouvieux-Cotte-Pattat N."/>
            <person name="Condemine G."/>
            <person name="Bohin J.P."/>
            <person name="Van Gijsegem F."/>
            <person name="Yang S."/>
            <person name="Franza T."/>
            <person name="Expert D."/>
            <person name="Plunkett G. III"/>
            <person name="San Francisco M.J."/>
            <person name="Charkowski A.O."/>
            <person name="Py B."/>
            <person name="Bell K."/>
            <person name="Rauscher L."/>
            <person name="Rodriguez-Palenzuela P."/>
            <person name="Toussaint A."/>
            <person name="Holeva M.C."/>
            <person name="He S.Y."/>
            <person name="Douet V."/>
            <person name="Boccara M."/>
            <person name="Blanco C."/>
            <person name="Toth I."/>
            <person name="Anderson B.D."/>
            <person name="Biehl B.S."/>
            <person name="Mau B."/>
            <person name="Flynn S.M."/>
            <person name="Barras F."/>
            <person name="Lindeberg M."/>
            <person name="Birch P.R."/>
            <person name="Tsuyumu S."/>
            <person name="Shi X."/>
            <person name="Hibbing M."/>
            <person name="Yap M.N."/>
            <person name="Carpentier M."/>
            <person name="Dassa E."/>
            <person name="Umehara M."/>
            <person name="Kim J.F."/>
            <person name="Rusch M."/>
            <person name="Soni P."/>
            <person name="Mayhew G.F."/>
            <person name="Fouts D.E."/>
            <person name="Gill S.R."/>
            <person name="Blattner F.R."/>
            <person name="Keen N.T."/>
            <person name="Perna N.T."/>
        </authorList>
    </citation>
    <scope>NUCLEOTIDE SEQUENCE [LARGE SCALE GENOMIC DNA]</scope>
    <source>
        <strain>3937</strain>
    </source>
</reference>
<reference key="2">
    <citation type="journal article" date="2013" name="Proc. Natl. Acad. Sci. U.S.A.">
        <title>Rhs proteins from diverse bacteria mediate intercellular competition.</title>
        <authorList>
            <person name="Koskiniemi S."/>
            <person name="Lamoureux J.G."/>
            <person name="Nikolakakis K.C."/>
            <person name="t'Kint de Roodenbeke C."/>
            <person name="Kaplan M.D."/>
            <person name="Low D.A."/>
            <person name="Hayes C.S."/>
        </authorList>
    </citation>
    <scope>POSSIBLE FUNCTION</scope>
    <scope>DISRUPTION PHENOTYPE</scope>
    <source>
        <strain>3937</strain>
    </source>
</reference>